<organism>
    <name type="scientific">Shewanella sp. (strain W3-18-1)</name>
    <dbReference type="NCBI Taxonomy" id="351745"/>
    <lineage>
        <taxon>Bacteria</taxon>
        <taxon>Pseudomonadati</taxon>
        <taxon>Pseudomonadota</taxon>
        <taxon>Gammaproteobacteria</taxon>
        <taxon>Alteromonadales</taxon>
        <taxon>Shewanellaceae</taxon>
        <taxon>Shewanella</taxon>
    </lineage>
</organism>
<reference key="1">
    <citation type="submission" date="2006-12" db="EMBL/GenBank/DDBJ databases">
        <title>Complete sequence of Shewanella sp. W3-18-1.</title>
        <authorList>
            <consortium name="US DOE Joint Genome Institute"/>
            <person name="Copeland A."/>
            <person name="Lucas S."/>
            <person name="Lapidus A."/>
            <person name="Barry K."/>
            <person name="Detter J.C."/>
            <person name="Glavina del Rio T."/>
            <person name="Hammon N."/>
            <person name="Israni S."/>
            <person name="Dalin E."/>
            <person name="Tice H."/>
            <person name="Pitluck S."/>
            <person name="Chain P."/>
            <person name="Malfatti S."/>
            <person name="Shin M."/>
            <person name="Vergez L."/>
            <person name="Schmutz J."/>
            <person name="Larimer F."/>
            <person name="Land M."/>
            <person name="Hauser L."/>
            <person name="Kyrpides N."/>
            <person name="Lykidis A."/>
            <person name="Tiedje J."/>
            <person name="Richardson P."/>
        </authorList>
    </citation>
    <scope>NUCLEOTIDE SEQUENCE [LARGE SCALE GENOMIC DNA]</scope>
    <source>
        <strain>W3-18-1</strain>
    </source>
</reference>
<keyword id="KW-0028">Amino-acid biosynthesis</keyword>
<keyword id="KW-0055">Arginine biosynthesis</keyword>
<keyword id="KW-0067">ATP-binding</keyword>
<keyword id="KW-0963">Cytoplasm</keyword>
<keyword id="KW-0436">Ligase</keyword>
<keyword id="KW-0547">Nucleotide-binding</keyword>
<evidence type="ECO:0000255" key="1">
    <source>
        <dbReference type="HAMAP-Rule" id="MF_00005"/>
    </source>
</evidence>
<name>ASSY_SHESW</name>
<protein>
    <recommendedName>
        <fullName evidence="1">Argininosuccinate synthase</fullName>
        <ecNumber evidence="1">6.3.4.5</ecNumber>
    </recommendedName>
    <alternativeName>
        <fullName evidence="1">Citrulline--aspartate ligase</fullName>
    </alternativeName>
</protein>
<gene>
    <name evidence="1" type="primary">argG</name>
    <name type="ordered locus">Sputw3181_3857</name>
</gene>
<proteinExistence type="inferred from homology"/>
<comment type="catalytic activity">
    <reaction evidence="1">
        <text>L-citrulline + L-aspartate + ATP = 2-(N(omega)-L-arginino)succinate + AMP + diphosphate + H(+)</text>
        <dbReference type="Rhea" id="RHEA:10932"/>
        <dbReference type="ChEBI" id="CHEBI:15378"/>
        <dbReference type="ChEBI" id="CHEBI:29991"/>
        <dbReference type="ChEBI" id="CHEBI:30616"/>
        <dbReference type="ChEBI" id="CHEBI:33019"/>
        <dbReference type="ChEBI" id="CHEBI:57472"/>
        <dbReference type="ChEBI" id="CHEBI:57743"/>
        <dbReference type="ChEBI" id="CHEBI:456215"/>
        <dbReference type="EC" id="6.3.4.5"/>
    </reaction>
</comment>
<comment type="pathway">
    <text evidence="1">Amino-acid biosynthesis; L-arginine biosynthesis; L-arginine from L-ornithine and carbamoyl phosphate: step 2/3.</text>
</comment>
<comment type="subunit">
    <text evidence="1">Homotetramer.</text>
</comment>
<comment type="subcellular location">
    <subcellularLocation>
        <location evidence="1">Cytoplasm</location>
    </subcellularLocation>
</comment>
<comment type="similarity">
    <text evidence="1">Belongs to the argininosuccinate synthase family. Type 1 subfamily.</text>
</comment>
<feature type="chain" id="PRO_1000000436" description="Argininosuccinate synthase">
    <location>
        <begin position="1"/>
        <end position="407"/>
    </location>
</feature>
<feature type="binding site" evidence="1">
    <location>
        <begin position="16"/>
        <end position="24"/>
    </location>
    <ligand>
        <name>ATP</name>
        <dbReference type="ChEBI" id="CHEBI:30616"/>
    </ligand>
</feature>
<feature type="binding site" evidence="1">
    <location>
        <position position="44"/>
    </location>
    <ligand>
        <name>ATP</name>
        <dbReference type="ChEBI" id="CHEBI:30616"/>
    </ligand>
</feature>
<feature type="binding site" evidence="1">
    <location>
        <position position="96"/>
    </location>
    <ligand>
        <name>L-citrulline</name>
        <dbReference type="ChEBI" id="CHEBI:57743"/>
    </ligand>
</feature>
<feature type="binding site" evidence="1">
    <location>
        <position position="101"/>
    </location>
    <ligand>
        <name>L-citrulline</name>
        <dbReference type="ChEBI" id="CHEBI:57743"/>
    </ligand>
</feature>
<feature type="binding site" evidence="1">
    <location>
        <position position="126"/>
    </location>
    <ligand>
        <name>ATP</name>
        <dbReference type="ChEBI" id="CHEBI:30616"/>
    </ligand>
</feature>
<feature type="binding site" evidence="1">
    <location>
        <position position="128"/>
    </location>
    <ligand>
        <name>L-aspartate</name>
        <dbReference type="ChEBI" id="CHEBI:29991"/>
    </ligand>
</feature>
<feature type="binding site" evidence="1">
    <location>
        <position position="132"/>
    </location>
    <ligand>
        <name>L-aspartate</name>
        <dbReference type="ChEBI" id="CHEBI:29991"/>
    </ligand>
</feature>
<feature type="binding site" evidence="1">
    <location>
        <position position="132"/>
    </location>
    <ligand>
        <name>L-citrulline</name>
        <dbReference type="ChEBI" id="CHEBI:57743"/>
    </ligand>
</feature>
<feature type="binding site" evidence="1">
    <location>
        <position position="133"/>
    </location>
    <ligand>
        <name>L-aspartate</name>
        <dbReference type="ChEBI" id="CHEBI:29991"/>
    </ligand>
</feature>
<feature type="binding site" evidence="1">
    <location>
        <position position="136"/>
    </location>
    <ligand>
        <name>L-citrulline</name>
        <dbReference type="ChEBI" id="CHEBI:57743"/>
    </ligand>
</feature>
<feature type="binding site" evidence="1">
    <location>
        <position position="185"/>
    </location>
    <ligand>
        <name>L-citrulline</name>
        <dbReference type="ChEBI" id="CHEBI:57743"/>
    </ligand>
</feature>
<feature type="binding site" evidence="1">
    <location>
        <position position="194"/>
    </location>
    <ligand>
        <name>L-citrulline</name>
        <dbReference type="ChEBI" id="CHEBI:57743"/>
    </ligand>
</feature>
<feature type="binding site" evidence="1">
    <location>
        <position position="270"/>
    </location>
    <ligand>
        <name>L-citrulline</name>
        <dbReference type="ChEBI" id="CHEBI:57743"/>
    </ligand>
</feature>
<feature type="binding site" evidence="1">
    <location>
        <position position="282"/>
    </location>
    <ligand>
        <name>L-citrulline</name>
        <dbReference type="ChEBI" id="CHEBI:57743"/>
    </ligand>
</feature>
<sequence>MSIENKNTGVKKVVLAYSGGLDTSAIIPWLKENYDNCEIIAFCADVGQGEEELVGLTEKALASGASECHIVDLKEEFVKDYIYPTMATGAIYEGTYLLGTSMARPIIAKAQVEVARKVGADALCHGCTGKGNDQVRFEGCFAALAPDLKVIAPWREWTMQSREDLLDYLAERNIKTSASATKIYSRDANAFHISHEGGELEDPWNEPSKGVWTLTADPEDAPNQPEYVSLEVENGRVTKVNGEALTPYAALMKLNAIAAPHGVGRIDITENRLVGMKSRGCYETPGGTVMFAALRAIEELVLDKTSRTWREQVGAQMAHLVYDGRWFTPLCKSLLAASESLAESVNGGVVVKLYKGHAIAVKKRSPNSLYSEAFATFGEDQVYDQKHAEGFIRLYSLASRIRALNAK</sequence>
<dbReference type="EC" id="6.3.4.5" evidence="1"/>
<dbReference type="EMBL" id="CP000503">
    <property type="protein sequence ID" value="ABM26661.1"/>
    <property type="molecule type" value="Genomic_DNA"/>
</dbReference>
<dbReference type="RefSeq" id="WP_011791085.1">
    <property type="nucleotide sequence ID" value="NC_008750.1"/>
</dbReference>
<dbReference type="SMR" id="A1RPR6"/>
<dbReference type="KEGG" id="shw:Sputw3181_3857"/>
<dbReference type="HOGENOM" id="CLU_032784_4_2_6"/>
<dbReference type="UniPathway" id="UPA00068">
    <property type="reaction ID" value="UER00113"/>
</dbReference>
<dbReference type="Proteomes" id="UP000002597">
    <property type="component" value="Chromosome"/>
</dbReference>
<dbReference type="GO" id="GO:0005737">
    <property type="term" value="C:cytoplasm"/>
    <property type="evidence" value="ECO:0007669"/>
    <property type="project" value="UniProtKB-SubCell"/>
</dbReference>
<dbReference type="GO" id="GO:0004055">
    <property type="term" value="F:argininosuccinate synthase activity"/>
    <property type="evidence" value="ECO:0007669"/>
    <property type="project" value="UniProtKB-UniRule"/>
</dbReference>
<dbReference type="GO" id="GO:0005524">
    <property type="term" value="F:ATP binding"/>
    <property type="evidence" value="ECO:0007669"/>
    <property type="project" value="UniProtKB-UniRule"/>
</dbReference>
<dbReference type="GO" id="GO:0000053">
    <property type="term" value="P:argininosuccinate metabolic process"/>
    <property type="evidence" value="ECO:0007669"/>
    <property type="project" value="TreeGrafter"/>
</dbReference>
<dbReference type="GO" id="GO:0006526">
    <property type="term" value="P:L-arginine biosynthetic process"/>
    <property type="evidence" value="ECO:0007669"/>
    <property type="project" value="UniProtKB-UniRule"/>
</dbReference>
<dbReference type="GO" id="GO:0000050">
    <property type="term" value="P:urea cycle"/>
    <property type="evidence" value="ECO:0007669"/>
    <property type="project" value="TreeGrafter"/>
</dbReference>
<dbReference type="CDD" id="cd01999">
    <property type="entry name" value="ASS"/>
    <property type="match status" value="1"/>
</dbReference>
<dbReference type="FunFam" id="1.20.5.470:FF:000005">
    <property type="entry name" value="Argininosuccinate synthase"/>
    <property type="match status" value="1"/>
</dbReference>
<dbReference type="FunFam" id="3.40.50.620:FF:000019">
    <property type="entry name" value="Argininosuccinate synthase"/>
    <property type="match status" value="1"/>
</dbReference>
<dbReference type="FunFam" id="3.90.1260.10:FF:000007">
    <property type="entry name" value="Argininosuccinate synthase"/>
    <property type="match status" value="1"/>
</dbReference>
<dbReference type="Gene3D" id="3.90.1260.10">
    <property type="entry name" value="Argininosuccinate synthetase, chain A, domain 2"/>
    <property type="match status" value="1"/>
</dbReference>
<dbReference type="Gene3D" id="3.40.50.620">
    <property type="entry name" value="HUPs"/>
    <property type="match status" value="1"/>
</dbReference>
<dbReference type="Gene3D" id="1.20.5.470">
    <property type="entry name" value="Single helix bin"/>
    <property type="match status" value="1"/>
</dbReference>
<dbReference type="HAMAP" id="MF_00005">
    <property type="entry name" value="Arg_succ_synth_type1"/>
    <property type="match status" value="1"/>
</dbReference>
<dbReference type="InterPro" id="IPR048268">
    <property type="entry name" value="Arginosuc_syn_C"/>
</dbReference>
<dbReference type="InterPro" id="IPR048267">
    <property type="entry name" value="Arginosuc_syn_N"/>
</dbReference>
<dbReference type="InterPro" id="IPR001518">
    <property type="entry name" value="Arginosuc_synth"/>
</dbReference>
<dbReference type="InterPro" id="IPR018223">
    <property type="entry name" value="Arginosuc_synth_CS"/>
</dbReference>
<dbReference type="InterPro" id="IPR023434">
    <property type="entry name" value="Arginosuc_synth_type_1_subfam"/>
</dbReference>
<dbReference type="InterPro" id="IPR024074">
    <property type="entry name" value="AS_cat/multimer_dom_body"/>
</dbReference>
<dbReference type="InterPro" id="IPR014729">
    <property type="entry name" value="Rossmann-like_a/b/a_fold"/>
</dbReference>
<dbReference type="NCBIfam" id="TIGR00032">
    <property type="entry name" value="argG"/>
    <property type="match status" value="1"/>
</dbReference>
<dbReference type="NCBIfam" id="NF001770">
    <property type="entry name" value="PRK00509.1"/>
    <property type="match status" value="1"/>
</dbReference>
<dbReference type="PANTHER" id="PTHR11587">
    <property type="entry name" value="ARGININOSUCCINATE SYNTHASE"/>
    <property type="match status" value="1"/>
</dbReference>
<dbReference type="PANTHER" id="PTHR11587:SF2">
    <property type="entry name" value="ARGININOSUCCINATE SYNTHASE"/>
    <property type="match status" value="1"/>
</dbReference>
<dbReference type="Pfam" id="PF20979">
    <property type="entry name" value="Arginosuc_syn_C"/>
    <property type="match status" value="1"/>
</dbReference>
<dbReference type="Pfam" id="PF00764">
    <property type="entry name" value="Arginosuc_synth"/>
    <property type="match status" value="1"/>
</dbReference>
<dbReference type="SUPFAM" id="SSF52402">
    <property type="entry name" value="Adenine nucleotide alpha hydrolases-like"/>
    <property type="match status" value="1"/>
</dbReference>
<dbReference type="SUPFAM" id="SSF69864">
    <property type="entry name" value="Argininosuccinate synthetase, C-terminal domain"/>
    <property type="match status" value="1"/>
</dbReference>
<dbReference type="PROSITE" id="PS00564">
    <property type="entry name" value="ARGININOSUCCIN_SYN_1"/>
    <property type="match status" value="1"/>
</dbReference>
<dbReference type="PROSITE" id="PS00565">
    <property type="entry name" value="ARGININOSUCCIN_SYN_2"/>
    <property type="match status" value="1"/>
</dbReference>
<accession>A1RPR6</accession>